<evidence type="ECO:0000250" key="1">
    <source>
        <dbReference type="UniProtKB" id="G3UVW3"/>
    </source>
</evidence>
<evidence type="ECO:0000255" key="2"/>
<evidence type="ECO:0000255" key="3">
    <source>
        <dbReference type="PROSITE-ProRule" id="PRU00114"/>
    </source>
</evidence>
<evidence type="ECO:0000256" key="4">
    <source>
        <dbReference type="SAM" id="MobiDB-lite"/>
    </source>
</evidence>
<evidence type="ECO:0000305" key="5"/>
<organism>
    <name type="scientific">Xenopus tropicalis</name>
    <name type="common">Western clawed frog</name>
    <name type="synonym">Silurana tropicalis</name>
    <dbReference type="NCBI Taxonomy" id="8364"/>
    <lineage>
        <taxon>Eukaryota</taxon>
        <taxon>Metazoa</taxon>
        <taxon>Chordata</taxon>
        <taxon>Craniata</taxon>
        <taxon>Vertebrata</taxon>
        <taxon>Euteleostomi</taxon>
        <taxon>Amphibia</taxon>
        <taxon>Batrachia</taxon>
        <taxon>Anura</taxon>
        <taxon>Pipoidea</taxon>
        <taxon>Pipidae</taxon>
        <taxon>Xenopodinae</taxon>
        <taxon>Xenopus</taxon>
        <taxon>Silurana</taxon>
    </lineage>
</organism>
<name>S38A6_XENTR</name>
<protein>
    <recommendedName>
        <fullName>Probable sodium-coupled neutral amino acid transporter 6</fullName>
    </recommendedName>
    <alternativeName>
        <fullName>Na(+)-coupled neutral amino acid transporter 6</fullName>
    </alternativeName>
    <alternativeName>
        <fullName>Solute carrier family 38 member 6</fullName>
    </alternativeName>
</protein>
<accession>Q28HE5</accession>
<dbReference type="EMBL" id="CR760918">
    <property type="protein sequence ID" value="CAJ82301.1"/>
    <property type="molecule type" value="mRNA"/>
</dbReference>
<dbReference type="RefSeq" id="NP_001008117.2">
    <property type="nucleotide sequence ID" value="NM_001008116.2"/>
</dbReference>
<dbReference type="SMR" id="Q28HE5"/>
<dbReference type="FunCoup" id="Q28HE5">
    <property type="interactions" value="340"/>
</dbReference>
<dbReference type="STRING" id="8364.ENSXETP00000042818"/>
<dbReference type="GlyCosmos" id="Q28HE5">
    <property type="glycosylation" value="2 sites, No reported glycans"/>
</dbReference>
<dbReference type="PaxDb" id="8364-ENSXETP00000031652"/>
<dbReference type="DNASU" id="493479"/>
<dbReference type="GeneID" id="493479"/>
<dbReference type="KEGG" id="xtr:493479"/>
<dbReference type="AGR" id="Xenbase:XB-GENE-1016511"/>
<dbReference type="CTD" id="145389"/>
<dbReference type="Xenbase" id="XB-GENE-1016511">
    <property type="gene designation" value="slc38a6"/>
</dbReference>
<dbReference type="eggNOG" id="KOG1305">
    <property type="taxonomic scope" value="Eukaryota"/>
</dbReference>
<dbReference type="HOGENOM" id="CLU_009020_0_0_1"/>
<dbReference type="InParanoid" id="Q28HE5"/>
<dbReference type="OMA" id="KARMQNV"/>
<dbReference type="OrthoDB" id="28208at2759"/>
<dbReference type="PhylomeDB" id="Q28HE5"/>
<dbReference type="TreeFam" id="TF328787"/>
<dbReference type="Proteomes" id="UP000008143">
    <property type="component" value="Chromosome 8"/>
</dbReference>
<dbReference type="Bgee" id="ENSXETG00000014459">
    <property type="expression patterns" value="Expressed in early embryo and 14 other cell types or tissues"/>
</dbReference>
<dbReference type="GO" id="GO:0005886">
    <property type="term" value="C:plasma membrane"/>
    <property type="evidence" value="ECO:0000250"/>
    <property type="project" value="UniProtKB"/>
</dbReference>
<dbReference type="GO" id="GO:0006865">
    <property type="term" value="P:amino acid transport"/>
    <property type="evidence" value="ECO:0007669"/>
    <property type="project" value="UniProtKB-KW"/>
</dbReference>
<dbReference type="GO" id="GO:0006814">
    <property type="term" value="P:sodium ion transport"/>
    <property type="evidence" value="ECO:0007669"/>
    <property type="project" value="UniProtKB-KW"/>
</dbReference>
<dbReference type="InterPro" id="IPR013057">
    <property type="entry name" value="AA_transpt_TM"/>
</dbReference>
<dbReference type="PANTHER" id="PTHR22950">
    <property type="entry name" value="AMINO ACID TRANSPORTER"/>
    <property type="match status" value="1"/>
</dbReference>
<dbReference type="PANTHER" id="PTHR22950:SF366">
    <property type="entry name" value="SODIUM-COUPLED NEUTRAL AMINO ACID TRANSPORTER 6-RELATED"/>
    <property type="match status" value="1"/>
</dbReference>
<dbReference type="Pfam" id="PF01490">
    <property type="entry name" value="Aa_trans"/>
    <property type="match status" value="1"/>
</dbReference>
<feature type="chain" id="PRO_0000311424" description="Probable sodium-coupled neutral amino acid transporter 6">
    <location>
        <begin position="1"/>
        <end position="448"/>
    </location>
</feature>
<feature type="transmembrane region" description="Helical" evidence="2">
    <location>
        <begin position="40"/>
        <end position="60"/>
    </location>
</feature>
<feature type="transmembrane region" description="Helical" evidence="2">
    <location>
        <begin position="69"/>
        <end position="89"/>
    </location>
</feature>
<feature type="transmembrane region" description="Helical" evidence="2">
    <location>
        <begin position="117"/>
        <end position="137"/>
    </location>
</feature>
<feature type="transmembrane region" description="Helical" evidence="2">
    <location>
        <begin position="164"/>
        <end position="184"/>
    </location>
</feature>
<feature type="transmembrane region" description="Helical" evidence="2">
    <location>
        <begin position="185"/>
        <end position="205"/>
    </location>
</feature>
<feature type="transmembrane region" description="Helical" evidence="2">
    <location>
        <begin position="244"/>
        <end position="264"/>
    </location>
</feature>
<feature type="transmembrane region" description="Helical" evidence="2">
    <location>
        <begin position="281"/>
        <end position="301"/>
    </location>
</feature>
<feature type="transmembrane region" description="Helical" evidence="2">
    <location>
        <begin position="321"/>
        <end position="341"/>
    </location>
</feature>
<feature type="transmembrane region" description="Helical" evidence="2">
    <location>
        <begin position="365"/>
        <end position="385"/>
    </location>
</feature>
<feature type="transmembrane region" description="Helical" evidence="2">
    <location>
        <begin position="388"/>
        <end position="408"/>
    </location>
</feature>
<feature type="transmembrane region" description="Helical" evidence="2">
    <location>
        <begin position="425"/>
        <end position="445"/>
    </location>
</feature>
<feature type="region of interest" description="Disordered" evidence="4">
    <location>
        <begin position="1"/>
        <end position="36"/>
    </location>
</feature>
<feature type="compositionally biased region" description="Polar residues" evidence="4">
    <location>
        <begin position="1"/>
        <end position="12"/>
    </location>
</feature>
<feature type="compositionally biased region" description="Polar residues" evidence="4">
    <location>
        <begin position="26"/>
        <end position="36"/>
    </location>
</feature>
<feature type="glycosylation site" description="N-linked (GlcNAc...) asparagine" evidence="2">
    <location>
        <position position="218"/>
    </location>
</feature>
<feature type="glycosylation site" description="N-linked (GlcNAc...) asparagine" evidence="2">
    <location>
        <position position="228"/>
    </location>
</feature>
<feature type="disulfide bond" evidence="3">
    <location>
        <begin position="212"/>
        <end position="232"/>
    </location>
</feature>
<reference key="1">
    <citation type="submission" date="2006-10" db="EMBL/GenBank/DDBJ databases">
        <authorList>
            <consortium name="Sanger Xenopus tropicalis EST/cDNA project"/>
        </authorList>
    </citation>
    <scope>NUCLEOTIDE SEQUENCE [LARGE SCALE MRNA]</scope>
    <source>
        <tissue>Egg</tissue>
    </source>
</reference>
<keyword id="KW-0029">Amino-acid transport</keyword>
<keyword id="KW-1003">Cell membrane</keyword>
<keyword id="KW-1015">Disulfide bond</keyword>
<keyword id="KW-0325">Glycoprotein</keyword>
<keyword id="KW-0406">Ion transport</keyword>
<keyword id="KW-0472">Membrane</keyword>
<keyword id="KW-1185">Reference proteome</keyword>
<keyword id="KW-0915">Sodium</keyword>
<keyword id="KW-0739">Sodium transport</keyword>
<keyword id="KW-0812">Transmembrane</keyword>
<keyword id="KW-1133">Transmembrane helix</keyword>
<keyword id="KW-0813">Transport</keyword>
<proteinExistence type="evidence at transcript level"/>
<sequence>MQASDSSINTLDGHQVSAGRDESTPLLANSPQRRSSGGTSFGFAVFNLMNAIMGSGILGLSYAMAKTGILGFSALLLIVALLAAYSIHLLLRMCLLTAVTSYEDLGLYAFGRSGKVLVACTILIQNVGAMSSYLFIIKSELPAAIASFLPGAQGEPWYLDGRTLLIITSVCIVLPLALLPKIGFLGYTSSLSFFFMVYFAVVIVIKKWNIPCPLPPLNHTVTFLQAPNISECKPKLFDFSKESAFALPTMAFSFLCHTSVLPIYCELKSPSKSKMQNVANVGIALSFLIYYISALFGYLTFYDNVKSELLQGYSKYLPKDVLIITVRLCILLAVLLTVPLIHFPARKAVMMMFFSRYPFSYIRHILVTLVLNIIIVLLAIYVPDMRSVFGVVGSTTSTCLLFVFPGLFYVKLGREDCSSPQKFGACGLLVLGICIGACSLTLIIMNLA</sequence>
<comment type="function">
    <text evidence="1">Probable sodium-dependent amino acid/proton antiporter, could be a neuronal transporter for glutamate.</text>
</comment>
<comment type="subcellular location">
    <subcellularLocation>
        <location evidence="1">Cell membrane</location>
        <topology evidence="2">Multi-pass membrane protein</topology>
    </subcellularLocation>
</comment>
<comment type="similarity">
    <text evidence="5">Belongs to the amino acid/polyamine transporter 2 family.</text>
</comment>
<gene>
    <name type="primary">slc38a6</name>
    <name type="ORF">TEgg038h13.1</name>
</gene>